<proteinExistence type="inferred from homology"/>
<reference key="1">
    <citation type="journal article" date="2001" name="Science">
        <title>The genome of the natural genetic engineer Agrobacterium tumefaciens C58.</title>
        <authorList>
            <person name="Wood D.W."/>
            <person name="Setubal J.C."/>
            <person name="Kaul R."/>
            <person name="Monks D.E."/>
            <person name="Kitajima J.P."/>
            <person name="Okura V.K."/>
            <person name="Zhou Y."/>
            <person name="Chen L."/>
            <person name="Wood G.E."/>
            <person name="Almeida N.F. Jr."/>
            <person name="Woo L."/>
            <person name="Chen Y."/>
            <person name="Paulsen I.T."/>
            <person name="Eisen J.A."/>
            <person name="Karp P.D."/>
            <person name="Bovee D. Sr."/>
            <person name="Chapman P."/>
            <person name="Clendenning J."/>
            <person name="Deatherage G."/>
            <person name="Gillet W."/>
            <person name="Grant C."/>
            <person name="Kutyavin T."/>
            <person name="Levy R."/>
            <person name="Li M.-J."/>
            <person name="McClelland E."/>
            <person name="Palmieri A."/>
            <person name="Raymond C."/>
            <person name="Rouse G."/>
            <person name="Saenphimmachak C."/>
            <person name="Wu Z."/>
            <person name="Romero P."/>
            <person name="Gordon D."/>
            <person name="Zhang S."/>
            <person name="Yoo H."/>
            <person name="Tao Y."/>
            <person name="Biddle P."/>
            <person name="Jung M."/>
            <person name="Krespan W."/>
            <person name="Perry M."/>
            <person name="Gordon-Kamm B."/>
            <person name="Liao L."/>
            <person name="Kim S."/>
            <person name="Hendrick C."/>
            <person name="Zhao Z.-Y."/>
            <person name="Dolan M."/>
            <person name="Chumley F."/>
            <person name="Tingey S.V."/>
            <person name="Tomb J.-F."/>
            <person name="Gordon M.P."/>
            <person name="Olson M.V."/>
            <person name="Nester E.W."/>
        </authorList>
    </citation>
    <scope>NUCLEOTIDE SEQUENCE [LARGE SCALE GENOMIC DNA]</scope>
    <source>
        <strain>C58 / ATCC 33970</strain>
    </source>
</reference>
<reference key="2">
    <citation type="journal article" date="2001" name="Science">
        <title>Genome sequence of the plant pathogen and biotechnology agent Agrobacterium tumefaciens C58.</title>
        <authorList>
            <person name="Goodner B."/>
            <person name="Hinkle G."/>
            <person name="Gattung S."/>
            <person name="Miller N."/>
            <person name="Blanchard M."/>
            <person name="Qurollo B."/>
            <person name="Goldman B.S."/>
            <person name="Cao Y."/>
            <person name="Askenazi M."/>
            <person name="Halling C."/>
            <person name="Mullin L."/>
            <person name="Houmiel K."/>
            <person name="Gordon J."/>
            <person name="Vaudin M."/>
            <person name="Iartchouk O."/>
            <person name="Epp A."/>
            <person name="Liu F."/>
            <person name="Wollam C."/>
            <person name="Allinger M."/>
            <person name="Doughty D."/>
            <person name="Scott C."/>
            <person name="Lappas C."/>
            <person name="Markelz B."/>
            <person name="Flanagan C."/>
            <person name="Crowell C."/>
            <person name="Gurson J."/>
            <person name="Lomo C."/>
            <person name="Sear C."/>
            <person name="Strub G."/>
            <person name="Cielo C."/>
            <person name="Slater S."/>
        </authorList>
    </citation>
    <scope>NUCLEOTIDE SEQUENCE [LARGE SCALE GENOMIC DNA]</scope>
    <source>
        <strain>C58 / ATCC 33970</strain>
    </source>
</reference>
<keyword id="KW-0030">Aminoacyl-tRNA synthetase</keyword>
<keyword id="KW-0067">ATP-binding</keyword>
<keyword id="KW-0963">Cytoplasm</keyword>
<keyword id="KW-0436">Ligase</keyword>
<keyword id="KW-0479">Metal-binding</keyword>
<keyword id="KW-0547">Nucleotide-binding</keyword>
<keyword id="KW-0648">Protein biosynthesis</keyword>
<keyword id="KW-1185">Reference proteome</keyword>
<keyword id="KW-0862">Zinc</keyword>
<dbReference type="EC" id="6.1.1.16" evidence="1"/>
<dbReference type="EMBL" id="AE007869">
    <property type="protein sequence ID" value="AAK86882.1"/>
    <property type="molecule type" value="Genomic_DNA"/>
</dbReference>
<dbReference type="PIR" id="A97491">
    <property type="entry name" value="A97491"/>
</dbReference>
<dbReference type="PIR" id="AH2708">
    <property type="entry name" value="AH2708"/>
</dbReference>
<dbReference type="RefSeq" id="NP_354097.1">
    <property type="nucleotide sequence ID" value="NC_003062.2"/>
</dbReference>
<dbReference type="RefSeq" id="WP_010971378.1">
    <property type="nucleotide sequence ID" value="NC_003062.2"/>
</dbReference>
<dbReference type="SMR" id="Q8UGG4"/>
<dbReference type="STRING" id="176299.Atu1073"/>
<dbReference type="EnsemblBacteria" id="AAK86882">
    <property type="protein sequence ID" value="AAK86882"/>
    <property type="gene ID" value="Atu1073"/>
</dbReference>
<dbReference type="GeneID" id="1133111"/>
<dbReference type="KEGG" id="atu:Atu1073"/>
<dbReference type="PATRIC" id="fig|176299.10.peg.1087"/>
<dbReference type="eggNOG" id="COG0215">
    <property type="taxonomic scope" value="Bacteria"/>
</dbReference>
<dbReference type="HOGENOM" id="CLU_013528_0_1_5"/>
<dbReference type="OrthoDB" id="9815130at2"/>
<dbReference type="PhylomeDB" id="Q8UGG4"/>
<dbReference type="BioCyc" id="AGRO:ATU1073-MONOMER"/>
<dbReference type="Proteomes" id="UP000000813">
    <property type="component" value="Chromosome circular"/>
</dbReference>
<dbReference type="GO" id="GO:0005829">
    <property type="term" value="C:cytosol"/>
    <property type="evidence" value="ECO:0007669"/>
    <property type="project" value="TreeGrafter"/>
</dbReference>
<dbReference type="GO" id="GO:0005524">
    <property type="term" value="F:ATP binding"/>
    <property type="evidence" value="ECO:0007669"/>
    <property type="project" value="UniProtKB-UniRule"/>
</dbReference>
<dbReference type="GO" id="GO:0004817">
    <property type="term" value="F:cysteine-tRNA ligase activity"/>
    <property type="evidence" value="ECO:0007669"/>
    <property type="project" value="UniProtKB-UniRule"/>
</dbReference>
<dbReference type="GO" id="GO:0008270">
    <property type="term" value="F:zinc ion binding"/>
    <property type="evidence" value="ECO:0007669"/>
    <property type="project" value="UniProtKB-UniRule"/>
</dbReference>
<dbReference type="GO" id="GO:0006423">
    <property type="term" value="P:cysteinyl-tRNA aminoacylation"/>
    <property type="evidence" value="ECO:0007669"/>
    <property type="project" value="UniProtKB-UniRule"/>
</dbReference>
<dbReference type="CDD" id="cd00672">
    <property type="entry name" value="CysRS_core"/>
    <property type="match status" value="1"/>
</dbReference>
<dbReference type="FunFam" id="3.40.50.620:FF:000068">
    <property type="entry name" value="Cysteine--tRNA ligase"/>
    <property type="match status" value="1"/>
</dbReference>
<dbReference type="Gene3D" id="1.20.120.640">
    <property type="entry name" value="Anticodon-binding domain of a subclass of class I aminoacyl-tRNA synthetases"/>
    <property type="match status" value="1"/>
</dbReference>
<dbReference type="Gene3D" id="3.40.50.620">
    <property type="entry name" value="HUPs"/>
    <property type="match status" value="1"/>
</dbReference>
<dbReference type="HAMAP" id="MF_00041">
    <property type="entry name" value="Cys_tRNA_synth"/>
    <property type="match status" value="1"/>
</dbReference>
<dbReference type="InterPro" id="IPR015803">
    <property type="entry name" value="Cys-tRNA-ligase"/>
</dbReference>
<dbReference type="InterPro" id="IPR024909">
    <property type="entry name" value="Cys-tRNA/MSH_ligase"/>
</dbReference>
<dbReference type="InterPro" id="IPR056411">
    <property type="entry name" value="CysS_C"/>
</dbReference>
<dbReference type="InterPro" id="IPR014729">
    <property type="entry name" value="Rossmann-like_a/b/a_fold"/>
</dbReference>
<dbReference type="InterPro" id="IPR032678">
    <property type="entry name" value="tRNA-synt_1_cat_dom"/>
</dbReference>
<dbReference type="InterPro" id="IPR009080">
    <property type="entry name" value="tRNAsynth_Ia_anticodon-bd"/>
</dbReference>
<dbReference type="NCBIfam" id="TIGR00435">
    <property type="entry name" value="cysS"/>
    <property type="match status" value="1"/>
</dbReference>
<dbReference type="PANTHER" id="PTHR10890:SF3">
    <property type="entry name" value="CYSTEINE--TRNA LIGASE, CYTOPLASMIC"/>
    <property type="match status" value="1"/>
</dbReference>
<dbReference type="PANTHER" id="PTHR10890">
    <property type="entry name" value="CYSTEINYL-TRNA SYNTHETASE"/>
    <property type="match status" value="1"/>
</dbReference>
<dbReference type="Pfam" id="PF23493">
    <property type="entry name" value="CysS_C"/>
    <property type="match status" value="1"/>
</dbReference>
<dbReference type="Pfam" id="PF01406">
    <property type="entry name" value="tRNA-synt_1e"/>
    <property type="match status" value="1"/>
</dbReference>
<dbReference type="PRINTS" id="PR00983">
    <property type="entry name" value="TRNASYNTHCYS"/>
</dbReference>
<dbReference type="SUPFAM" id="SSF47323">
    <property type="entry name" value="Anticodon-binding domain of a subclass of class I aminoacyl-tRNA synthetases"/>
    <property type="match status" value="1"/>
</dbReference>
<dbReference type="SUPFAM" id="SSF52374">
    <property type="entry name" value="Nucleotidylyl transferase"/>
    <property type="match status" value="1"/>
</dbReference>
<name>SYC_AGRFC</name>
<accession>Q8UGG4</accession>
<comment type="catalytic activity">
    <reaction evidence="1">
        <text>tRNA(Cys) + L-cysteine + ATP = L-cysteinyl-tRNA(Cys) + AMP + diphosphate</text>
        <dbReference type="Rhea" id="RHEA:17773"/>
        <dbReference type="Rhea" id="RHEA-COMP:9661"/>
        <dbReference type="Rhea" id="RHEA-COMP:9679"/>
        <dbReference type="ChEBI" id="CHEBI:30616"/>
        <dbReference type="ChEBI" id="CHEBI:33019"/>
        <dbReference type="ChEBI" id="CHEBI:35235"/>
        <dbReference type="ChEBI" id="CHEBI:78442"/>
        <dbReference type="ChEBI" id="CHEBI:78517"/>
        <dbReference type="ChEBI" id="CHEBI:456215"/>
        <dbReference type="EC" id="6.1.1.16"/>
    </reaction>
</comment>
<comment type="cofactor">
    <cofactor evidence="1">
        <name>Zn(2+)</name>
        <dbReference type="ChEBI" id="CHEBI:29105"/>
    </cofactor>
    <text evidence="1">Binds 1 zinc ion per subunit.</text>
</comment>
<comment type="subunit">
    <text evidence="1">Monomer.</text>
</comment>
<comment type="subcellular location">
    <subcellularLocation>
        <location evidence="1">Cytoplasm</location>
    </subcellularLocation>
</comment>
<comment type="similarity">
    <text evidence="1">Belongs to the class-I aminoacyl-tRNA synthetase family.</text>
</comment>
<organism>
    <name type="scientific">Agrobacterium fabrum (strain C58 / ATCC 33970)</name>
    <name type="common">Agrobacterium tumefaciens (strain C58)</name>
    <dbReference type="NCBI Taxonomy" id="176299"/>
    <lineage>
        <taxon>Bacteria</taxon>
        <taxon>Pseudomonadati</taxon>
        <taxon>Pseudomonadota</taxon>
        <taxon>Alphaproteobacteria</taxon>
        <taxon>Hyphomicrobiales</taxon>
        <taxon>Rhizobiaceae</taxon>
        <taxon>Rhizobium/Agrobacterium group</taxon>
        <taxon>Agrobacterium</taxon>
        <taxon>Agrobacterium tumefaciens complex</taxon>
    </lineage>
</organism>
<gene>
    <name evidence="1" type="primary">cysS</name>
    <name type="ordered locus">Atu1073</name>
    <name type="ORF">AGR_C_1982</name>
</gene>
<protein>
    <recommendedName>
        <fullName evidence="1">Cysteine--tRNA ligase</fullName>
        <ecNumber evidence="1">6.1.1.16</ecNumber>
    </recommendedName>
    <alternativeName>
        <fullName evidence="1">Cysteinyl-tRNA synthetase</fullName>
        <shortName evidence="1">CysRS</shortName>
    </alternativeName>
</protein>
<feature type="chain" id="PRO_0000159337" description="Cysteine--tRNA ligase">
    <location>
        <begin position="1"/>
        <end position="461"/>
    </location>
</feature>
<feature type="region of interest" description="Disordered" evidence="2">
    <location>
        <begin position="436"/>
        <end position="461"/>
    </location>
</feature>
<feature type="short sequence motif" description="'HIGH' region">
    <location>
        <begin position="33"/>
        <end position="43"/>
    </location>
</feature>
<feature type="short sequence motif" description="'KMSKS' region">
    <location>
        <begin position="277"/>
        <end position="281"/>
    </location>
</feature>
<feature type="compositionally biased region" description="Basic and acidic residues" evidence="2">
    <location>
        <begin position="436"/>
        <end position="452"/>
    </location>
</feature>
<feature type="binding site" evidence="1">
    <location>
        <position position="31"/>
    </location>
    <ligand>
        <name>Zn(2+)</name>
        <dbReference type="ChEBI" id="CHEBI:29105"/>
    </ligand>
</feature>
<feature type="binding site" evidence="1">
    <location>
        <position position="219"/>
    </location>
    <ligand>
        <name>Zn(2+)</name>
        <dbReference type="ChEBI" id="CHEBI:29105"/>
    </ligand>
</feature>
<feature type="binding site" evidence="1">
    <location>
        <position position="244"/>
    </location>
    <ligand>
        <name>Zn(2+)</name>
        <dbReference type="ChEBI" id="CHEBI:29105"/>
    </ligand>
</feature>
<feature type="binding site" evidence="1">
    <location>
        <position position="248"/>
    </location>
    <ligand>
        <name>Zn(2+)</name>
        <dbReference type="ChEBI" id="CHEBI:29105"/>
    </ligand>
</feature>
<feature type="binding site" evidence="1">
    <location>
        <position position="280"/>
    </location>
    <ligand>
        <name>ATP</name>
        <dbReference type="ChEBI" id="CHEBI:30616"/>
    </ligand>
</feature>
<evidence type="ECO:0000255" key="1">
    <source>
        <dbReference type="HAMAP-Rule" id="MF_00041"/>
    </source>
</evidence>
<evidence type="ECO:0000256" key="2">
    <source>
        <dbReference type="SAM" id="MobiDB-lite"/>
    </source>
</evidence>
<sequence length="461" mass="51608">MSLRLKLHNTLTREKSEFAPIDADNVRMYVCGPTVYDFAHIGNARPVIVFDVLFRLLRHVYGEDHVTYARNITDLDDKINARALRDYPHLPLNDAIHAVTKKTADQFHDDVAALGCLQPTVEPRATDYIAEMIYLIERLIERGHAYKAGGEVLFDTRSMADYGQLSKRPLDEQQAGARVAVEAHKKNPGDFVLWKLSSESEPGWESPWGLGRPGWHIECSAMAGRYLGEVFDIHGGGLDLIFPHHENEIAQSRCAHGTHVMANVWMHNGFVQVEGRKMSKSEGNFVTIYELLHTDKFGGRQWPGEVLRLAMLMTHYREPIDFSVKRLEEAERLLSKWPAAETSDAAADETVLEALADDLNTVAAVQALHALAHAANTDPSRLPAFAASAALLGVLPKKTEMDEAIVSAVDALVELRLEMLKAKNFAEADRLRDELSEKGIQLKDGKDKETGERTTTWELKR</sequence>